<sequence>MANNRRDRDKGDGSQGEGLSAGGGMPSEPEIVSVTVHPTPTLAVSLKPAQQGDIWASLLESSPWSANHGGRIEPVQPSPAPTRPTESPSVGDLVSRWSQPIWRTPSRVEEVETPESNFVIELEASQPITSDITVSVSDLVIEVQPIQTTEAEPEPELPVAEPEPGVVPVDVVAEAEPEPELPVAEPEPGVVPVDVVAEAEPEPELPVAEPEPEVVPVDVVAEAEPEPELPVAEPEPEVVPVDVVAEAEPEPELPVAEPEPEVVPVDVVAEAEPEPELPVAAPEPEVLPVEVVAEAEPEPELPVAAPEPEVLPVEVVAEAEPEPELPVAAPEPEVVPVDVVAEAEPEPELPVAEPELVHEAAVSEPVAESIEDAVAVPAPATNFGLAELMQAAAAMAPVLASPPSVAPAAKPVREPAKKRKAPPVRKKVATVQDVPVEDLLGGIFGIAGSAVRSVLSLGAGVVGGVVKGGRVIGDNVVAGARRLTGSAEGSCGTCSTSQCDTVGKKK</sequence>
<accession>Q2W8Q7</accession>
<comment type="function">
    <text evidence="1 4 9">Regulates the dynamic behavior of MamK filaments; paralog LimJ also promotes MamK turnover. At least one other protein besides MamJ and LimJ is required for MamK turnover (PubMed:21883528). May connect magnetosomes to MamK filaments (Probable). Moves from the cell poles towards midcell; movement does not depend on the treadmilling ability of MamK, suggesting MamJ associates and disassociates continuously from the MamK filament (By similarity).</text>
</comment>
<comment type="subunit">
    <text evidence="1">Forms homooligomers. Interacts with MamK.</text>
</comment>
<comment type="subcellular location">
    <subcellularLocation>
        <location evidence="3 6">Magnetosome</location>
    </subcellularLocation>
    <text evidence="3 6">Tagged protein extends in a line from one pole to the other, and is longer than the magnetosome chain.</text>
</comment>
<comment type="induction">
    <text evidence="8">Part of the probable 18 gene mamAB operon.</text>
</comment>
<comment type="domain">
    <text evidence="7">The center of the protein encodes 8.6 repetitions of a Glu-rich sequence.</text>
</comment>
<comment type="disruption phenotype">
    <text evidence="3 4">Single gene deletion, no effect on magnetic response or MamK filaments, gaps form in the magnetosome chain. A double mamJ/limJ deletion has wild-type magnetic response, but forms large gaps in the magnetosome chains reminiscent of the mamK deletion. MamK forms bundles in these gaps, but the MamK filaments are no longer dynamic (PubMed:21883528). Deletion of genes mamH to mamV (amb0961 to amb0978) gives cells with no magnetosomes and no magnetic response (PubMed:20212111).</text>
</comment>
<comment type="miscellaneous">
    <text evidence="7">This bacteria makes up to 20 cubo-octahedral magnetosomes of about 45 nm in diameter which contain membrane-bound crystals of magnetite (Fe(3)O(4)).</text>
</comment>
<comment type="miscellaneous">
    <text evidence="5">Expression of just the minimal mamAB gene cluster (amb0961 to amb0978), including this gene, is sufficient to form a minimal magnetosome chain with small magnetite particles.</text>
</comment>
<comment type="similarity">
    <text evidence="7">Belongs to the magnetosome MamJ protein family.</text>
</comment>
<keyword id="KW-0091">Biomineralization</keyword>
<keyword id="KW-1281">Magnetosome</keyword>
<keyword id="KW-0677">Repeat</keyword>
<reference key="1">
    <citation type="journal article" date="2005" name="DNA Res.">
        <title>Complete genome sequence of the facultative anaerobic magnetotactic bacterium Magnetospirillum sp. strain AMB-1.</title>
        <authorList>
            <person name="Matsunaga T."/>
            <person name="Okamura Y."/>
            <person name="Fukuda Y."/>
            <person name="Wahyudi A.T."/>
            <person name="Murase Y."/>
            <person name="Takeyama H."/>
        </authorList>
    </citation>
    <scope>NUCLEOTIDE SEQUENCE [LARGE SCALE GENOMIC DNA]</scope>
    <source>
        <strain>ATCC 700264 / AMB-1</strain>
    </source>
</reference>
<reference key="2">
    <citation type="journal article" date="2010" name="Proc. Natl. Acad. Sci. U.S.A.">
        <title>Comprehensive genetic dissection of the magnetosome gene island reveals the step-wise assembly of a prokaryotic organelle.</title>
        <authorList>
            <person name="Murat D."/>
            <person name="Quinlan A."/>
            <person name="Vali H."/>
            <person name="Komeili A."/>
        </authorList>
    </citation>
    <scope>SUBCELLULAR LOCATION</scope>
    <scope>PROBABLE OPERON</scope>
    <scope>DISRUPTION PHENOTYPE</scope>
    <source>
        <strain>ATCC 700264 / AMB-1</strain>
    </source>
</reference>
<reference key="3">
    <citation type="journal article" date="2011" name="Mol. Microbiol.">
        <title>MamK, a bacterial actin, forms dynamic filaments in vivo that are regulated by the acidic proteins MamJ and LimJ.</title>
        <authorList>
            <person name="Draper O."/>
            <person name="Byrne M.E."/>
            <person name="Li Z."/>
            <person name="Keyhani S."/>
            <person name="Barrozo J.C."/>
            <person name="Jensen G."/>
            <person name="Komeili A."/>
        </authorList>
    </citation>
    <scope>FUNCTION</scope>
    <scope>DISRUPTION PHENOTYPE</scope>
    <source>
        <strain>ATCC 700264 / AMB-1</strain>
    </source>
</reference>
<reference key="4">
    <citation type="journal article" date="2012" name="Mol. Microbiol.">
        <title>The magnetosome membrane protein, MmsF, is a major regulator of magnetite biomineralization in Magnetospirillum magneticum AMB-1.</title>
        <authorList>
            <person name="Murat D."/>
            <person name="Falahati V."/>
            <person name="Bertinetti L."/>
            <person name="Csencsits R."/>
            <person name="Koernig A."/>
            <person name="Downing K."/>
            <person name="Faivre D."/>
            <person name="Komeili A."/>
        </authorList>
    </citation>
    <scope>MINIMAL MAGNETOSOME ISLAND</scope>
    <source>
        <strain>ATCC 700264 / AMB-1</strain>
    </source>
</reference>
<reference key="5">
    <citation type="journal article" date="2016" name="J. Bacteriol.">
        <title>Comparative subcellular localization analysis of magnetosome proteins reveals a unique localization behavior of Mms6 protein onto magnetite crystals.</title>
        <authorList>
            <person name="Arakaki A."/>
            <person name="Kikuchi D."/>
            <person name="Tanaka M."/>
            <person name="Yamagishi A."/>
            <person name="Yoda T."/>
            <person name="Matsunaga T."/>
        </authorList>
    </citation>
    <scope>SUBCELLULAR LOCATION</scope>
    <source>
        <strain>ATCC 700264 / AMB-1</strain>
    </source>
</reference>
<name>MAMJ_PARM1</name>
<evidence type="ECO:0000250" key="1">
    <source>
        <dbReference type="UniProtKB" id="V6F519"/>
    </source>
</evidence>
<evidence type="ECO:0000256" key="2">
    <source>
        <dbReference type="SAM" id="MobiDB-lite"/>
    </source>
</evidence>
<evidence type="ECO:0000269" key="3">
    <source>
    </source>
</evidence>
<evidence type="ECO:0000269" key="4">
    <source>
    </source>
</evidence>
<evidence type="ECO:0000269" key="5">
    <source>
    </source>
</evidence>
<evidence type="ECO:0000269" key="6">
    <source>
    </source>
</evidence>
<evidence type="ECO:0000305" key="7"/>
<evidence type="ECO:0000305" key="8">
    <source>
    </source>
</evidence>
<evidence type="ECO:0000305" key="9">
    <source>
    </source>
</evidence>
<organism>
    <name type="scientific">Paramagnetospirillum magneticum (strain ATCC 700264 / AMB-1)</name>
    <name type="common">Magnetospirillum magneticum</name>
    <dbReference type="NCBI Taxonomy" id="342108"/>
    <lineage>
        <taxon>Bacteria</taxon>
        <taxon>Pseudomonadati</taxon>
        <taxon>Pseudomonadota</taxon>
        <taxon>Alphaproteobacteria</taxon>
        <taxon>Rhodospirillales</taxon>
        <taxon>Magnetospirillaceae</taxon>
        <taxon>Paramagnetospirillum</taxon>
    </lineage>
</organism>
<gene>
    <name type="primary">mamJ</name>
    <name type="ordered locus">amb0964</name>
</gene>
<proteinExistence type="inferred from homology"/>
<dbReference type="EMBL" id="AP007255">
    <property type="protein sequence ID" value="BAE49768.1"/>
    <property type="molecule type" value="Genomic_DNA"/>
</dbReference>
<dbReference type="RefSeq" id="WP_011383397.1">
    <property type="nucleotide sequence ID" value="NC_007626.1"/>
</dbReference>
<dbReference type="STRING" id="342108.amb0964"/>
<dbReference type="KEGG" id="mag:amb0964"/>
<dbReference type="HOGENOM" id="CLU_538390_0_0_5"/>
<dbReference type="Proteomes" id="UP000007058">
    <property type="component" value="Chromosome"/>
</dbReference>
<dbReference type="GO" id="GO:0110143">
    <property type="term" value="C:magnetosome"/>
    <property type="evidence" value="ECO:0000314"/>
    <property type="project" value="UniProtKB"/>
</dbReference>
<dbReference type="GO" id="GO:0140923">
    <property type="term" value="P:magnetosome assembly"/>
    <property type="evidence" value="ECO:0000315"/>
    <property type="project" value="UniProtKB"/>
</dbReference>
<dbReference type="NCBIfam" id="NF040987">
    <property type="entry name" value="MamJ"/>
    <property type="match status" value="2"/>
</dbReference>
<feature type="chain" id="PRO_0000447804" description="Magnetosome-associated protein MamJ">
    <location>
        <begin position="1"/>
        <end position="506"/>
    </location>
</feature>
<feature type="repeat" description="Acidic repeat 1">
    <location>
        <begin position="150"/>
        <end position="173"/>
    </location>
</feature>
<feature type="repeat" description="Acidic repeat 2">
    <location>
        <begin position="174"/>
        <end position="197"/>
    </location>
</feature>
<feature type="repeat" description="Acidic repeat 3">
    <location>
        <begin position="198"/>
        <end position="221"/>
    </location>
</feature>
<feature type="repeat" description="Acidic repeat 4">
    <location>
        <begin position="222"/>
        <end position="245"/>
    </location>
</feature>
<feature type="repeat" description="Acidic repeat 5">
    <location>
        <begin position="246"/>
        <end position="269"/>
    </location>
</feature>
<feature type="repeat" description="Acidic repeat 6">
    <location>
        <begin position="270"/>
        <end position="293"/>
    </location>
</feature>
<feature type="repeat" description="Acidic repeat 7">
    <location>
        <begin position="294"/>
        <end position="317"/>
    </location>
</feature>
<feature type="repeat" description="Acidic repeat 8">
    <location>
        <begin position="318"/>
        <end position="341"/>
    </location>
</feature>
<feature type="repeat" description="Acidic repeat 8.5">
    <location>
        <begin position="342"/>
        <end position="355"/>
    </location>
</feature>
<feature type="region of interest" description="Disordered" evidence="2">
    <location>
        <begin position="1"/>
        <end position="36"/>
    </location>
</feature>
<feature type="region of interest" description="Disordered" evidence="2">
    <location>
        <begin position="63"/>
        <end position="93"/>
    </location>
</feature>
<feature type="region of interest" description="Disordered" evidence="2">
    <location>
        <begin position="405"/>
        <end position="424"/>
    </location>
</feature>
<feature type="compositionally biased region" description="Basic and acidic residues" evidence="2">
    <location>
        <begin position="1"/>
        <end position="12"/>
    </location>
</feature>
<feature type="compositionally biased region" description="Gly residues" evidence="2">
    <location>
        <begin position="13"/>
        <end position="25"/>
    </location>
</feature>
<protein>
    <recommendedName>
        <fullName evidence="7">Magnetosome-associated protein MamJ</fullName>
    </recommendedName>
</protein>